<reference key="1">
    <citation type="journal article" date="2006" name="Nat. Biotechnol.">
        <title>Complete genome of the mutualistic, N2-fixing grass endophyte Azoarcus sp. strain BH72.</title>
        <authorList>
            <person name="Krause A."/>
            <person name="Ramakumar A."/>
            <person name="Bartels D."/>
            <person name="Battistoni F."/>
            <person name="Bekel T."/>
            <person name="Boch J."/>
            <person name="Boehm M."/>
            <person name="Friedrich F."/>
            <person name="Hurek T."/>
            <person name="Krause L."/>
            <person name="Linke B."/>
            <person name="McHardy A.C."/>
            <person name="Sarkar A."/>
            <person name="Schneiker S."/>
            <person name="Syed A.A."/>
            <person name="Thauer R."/>
            <person name="Vorhoelter F.-J."/>
            <person name="Weidner S."/>
            <person name="Puehler A."/>
            <person name="Reinhold-Hurek B."/>
            <person name="Kaiser O."/>
            <person name="Goesmann A."/>
        </authorList>
    </citation>
    <scope>NUCLEOTIDE SEQUENCE [LARGE SCALE GENOMIC DNA]</scope>
    <source>
        <strain>BH72</strain>
    </source>
</reference>
<protein>
    <recommendedName>
        <fullName evidence="1">Cobyric acid synthase</fullName>
    </recommendedName>
</protein>
<dbReference type="EMBL" id="AM406670">
    <property type="protein sequence ID" value="CAL96133.1"/>
    <property type="molecule type" value="Genomic_DNA"/>
</dbReference>
<dbReference type="RefSeq" id="WP_011767239.1">
    <property type="nucleotide sequence ID" value="NC_008702.1"/>
</dbReference>
<dbReference type="SMR" id="A1KBC7"/>
<dbReference type="STRING" id="62928.azo3517"/>
<dbReference type="KEGG" id="azo:azo3517"/>
<dbReference type="eggNOG" id="COG1492">
    <property type="taxonomic scope" value="Bacteria"/>
</dbReference>
<dbReference type="HOGENOM" id="CLU_019250_2_2_4"/>
<dbReference type="UniPathway" id="UPA00148"/>
<dbReference type="Proteomes" id="UP000002588">
    <property type="component" value="Chromosome"/>
</dbReference>
<dbReference type="GO" id="GO:0015420">
    <property type="term" value="F:ABC-type vitamin B12 transporter activity"/>
    <property type="evidence" value="ECO:0007669"/>
    <property type="project" value="UniProtKB-UniRule"/>
</dbReference>
<dbReference type="GO" id="GO:0003824">
    <property type="term" value="F:catalytic activity"/>
    <property type="evidence" value="ECO:0007669"/>
    <property type="project" value="InterPro"/>
</dbReference>
<dbReference type="GO" id="GO:0009236">
    <property type="term" value="P:cobalamin biosynthetic process"/>
    <property type="evidence" value="ECO:0007669"/>
    <property type="project" value="UniProtKB-UniRule"/>
</dbReference>
<dbReference type="CDD" id="cd05389">
    <property type="entry name" value="CobQ_N"/>
    <property type="match status" value="1"/>
</dbReference>
<dbReference type="CDD" id="cd01750">
    <property type="entry name" value="GATase1_CobQ"/>
    <property type="match status" value="1"/>
</dbReference>
<dbReference type="Gene3D" id="3.40.50.880">
    <property type="match status" value="1"/>
</dbReference>
<dbReference type="Gene3D" id="3.40.50.300">
    <property type="entry name" value="P-loop containing nucleotide triphosphate hydrolases"/>
    <property type="match status" value="1"/>
</dbReference>
<dbReference type="HAMAP" id="MF_00028">
    <property type="entry name" value="CobQ"/>
    <property type="match status" value="1"/>
</dbReference>
<dbReference type="InterPro" id="IPR029062">
    <property type="entry name" value="Class_I_gatase-like"/>
</dbReference>
<dbReference type="InterPro" id="IPR002586">
    <property type="entry name" value="CobQ/CobB/MinD/ParA_Nub-bd_dom"/>
</dbReference>
<dbReference type="InterPro" id="IPR033949">
    <property type="entry name" value="CobQ_GATase1"/>
</dbReference>
<dbReference type="InterPro" id="IPR047045">
    <property type="entry name" value="CobQ_N"/>
</dbReference>
<dbReference type="InterPro" id="IPR004459">
    <property type="entry name" value="CobQ_synth"/>
</dbReference>
<dbReference type="InterPro" id="IPR011698">
    <property type="entry name" value="GATase_3"/>
</dbReference>
<dbReference type="InterPro" id="IPR027417">
    <property type="entry name" value="P-loop_NTPase"/>
</dbReference>
<dbReference type="NCBIfam" id="TIGR00313">
    <property type="entry name" value="cobQ"/>
    <property type="match status" value="1"/>
</dbReference>
<dbReference type="NCBIfam" id="NF001989">
    <property type="entry name" value="PRK00784.1"/>
    <property type="match status" value="1"/>
</dbReference>
<dbReference type="PANTHER" id="PTHR21343:SF1">
    <property type="entry name" value="COBYRIC ACID SYNTHASE"/>
    <property type="match status" value="1"/>
</dbReference>
<dbReference type="PANTHER" id="PTHR21343">
    <property type="entry name" value="DETHIOBIOTIN SYNTHETASE"/>
    <property type="match status" value="1"/>
</dbReference>
<dbReference type="Pfam" id="PF01656">
    <property type="entry name" value="CbiA"/>
    <property type="match status" value="1"/>
</dbReference>
<dbReference type="Pfam" id="PF07685">
    <property type="entry name" value="GATase_3"/>
    <property type="match status" value="1"/>
</dbReference>
<dbReference type="SUPFAM" id="SSF52317">
    <property type="entry name" value="Class I glutamine amidotransferase-like"/>
    <property type="match status" value="1"/>
</dbReference>
<dbReference type="SUPFAM" id="SSF52540">
    <property type="entry name" value="P-loop containing nucleoside triphosphate hydrolases"/>
    <property type="match status" value="1"/>
</dbReference>
<dbReference type="PROSITE" id="PS51274">
    <property type="entry name" value="GATASE_COBBQ"/>
    <property type="match status" value="1"/>
</dbReference>
<accession>A1KBC7</accession>
<evidence type="ECO:0000255" key="1">
    <source>
        <dbReference type="HAMAP-Rule" id="MF_00028"/>
    </source>
</evidence>
<proteinExistence type="inferred from homology"/>
<feature type="chain" id="PRO_1000002344" description="Cobyric acid synthase">
    <location>
        <begin position="1"/>
        <end position="492"/>
    </location>
</feature>
<feature type="domain" description="GATase cobBQ-type" evidence="1">
    <location>
        <begin position="253"/>
        <end position="441"/>
    </location>
</feature>
<feature type="active site" description="Nucleophile" evidence="1">
    <location>
        <position position="334"/>
    </location>
</feature>
<feature type="active site" evidence="1">
    <location>
        <position position="433"/>
    </location>
</feature>
<name>COBQ_AZOSB</name>
<sequence>MSKASALMVQGTTSDAGKSTLVAGLARALVRRGVRVAPFKPQNMALNSAVTADGGEIGRAQALQAVAARIAPHTDFNPVLLKPSSDIGAQVIIHGKVMANLSARDYHAYKPTAMAAVMASFDRLSAQYEHVLIEGAGSPAEINLRDRDIANMGFAEAADVPVVLVADIDRGGVFAHLVGTLELLSPSEQARVRGFVINRFRGDIALLQPGLDWLTERTGRPVFGVLPYLHGLFLDAEDALANGQVAADRDGAVLKVIAPVYPRISNHTDLDALRLHPQVDFRWVGPGQAIPPADLVVLPGSKSVQADLAWLRAQGWEPALRRHLRYGGKVIGICGGFQMLGSTLADPHGLEGAPSTVAGLGALDIETVLEREKQLVNVRGRLALDGEAAVAGYEIHMGVSRGADLDRPAVLLEDGRADGALSADGQVLGTYLHGLFDTPQAVAALLDWAGLKGAAGVDLNARREADLDRLADAVEAHVDMAALFGAAWPDAA</sequence>
<keyword id="KW-0169">Cobalamin biosynthesis</keyword>
<keyword id="KW-0315">Glutamine amidotransferase</keyword>
<keyword id="KW-1185">Reference proteome</keyword>
<organism>
    <name type="scientific">Azoarcus sp. (strain BH72)</name>
    <dbReference type="NCBI Taxonomy" id="418699"/>
    <lineage>
        <taxon>Bacteria</taxon>
        <taxon>Pseudomonadati</taxon>
        <taxon>Pseudomonadota</taxon>
        <taxon>Betaproteobacteria</taxon>
        <taxon>Rhodocyclales</taxon>
        <taxon>Zoogloeaceae</taxon>
        <taxon>Azoarcus</taxon>
    </lineage>
</organism>
<gene>
    <name evidence="1" type="primary">cobQ</name>
    <name type="ordered locus">azo3517</name>
</gene>
<comment type="function">
    <text evidence="1">Catalyzes amidations at positions B, D, E, and G on adenosylcobyrinic A,C-diamide. NH(2) groups are provided by glutamine, and one molecule of ATP is hydrogenolyzed for each amidation.</text>
</comment>
<comment type="pathway">
    <text evidence="1">Cofactor biosynthesis; adenosylcobalamin biosynthesis.</text>
</comment>
<comment type="similarity">
    <text evidence="1">Belongs to the CobB/CobQ family. CobQ subfamily.</text>
</comment>